<keyword id="KW-0456">Lyase</keyword>
<keyword id="KW-0496">Mitochondrion</keyword>
<keyword id="KW-1185">Reference proteome</keyword>
<keyword id="KW-0809">Transit peptide</keyword>
<organism>
    <name type="scientific">Hypocrea atroviridis (strain ATCC 20476 / IMI 206040)</name>
    <name type="common">Trichoderma atroviride</name>
    <dbReference type="NCBI Taxonomy" id="452589"/>
    <lineage>
        <taxon>Eukaryota</taxon>
        <taxon>Fungi</taxon>
        <taxon>Dikarya</taxon>
        <taxon>Ascomycota</taxon>
        <taxon>Pezizomycotina</taxon>
        <taxon>Sordariomycetes</taxon>
        <taxon>Hypocreomycetidae</taxon>
        <taxon>Hypocreales</taxon>
        <taxon>Hypocreaceae</taxon>
        <taxon>Trichoderma</taxon>
    </lineage>
</organism>
<reference key="1">
    <citation type="journal article" date="2011" name="Genome Biol.">
        <title>Comparative genome sequence analysis underscores mycoparasitism as the ancestral life style of Trichoderma.</title>
        <authorList>
            <person name="Kubicek C.P."/>
            <person name="Herrera-Estrella A."/>
            <person name="Seidl-Seiboth V."/>
            <person name="Martinez D.A."/>
            <person name="Druzhinina I.S."/>
            <person name="Thon M."/>
            <person name="Zeilinger S."/>
            <person name="Casas-Flores S."/>
            <person name="Horwitz B.A."/>
            <person name="Mukherjee P.K."/>
            <person name="Mukherjee M."/>
            <person name="Kredics L."/>
            <person name="Alcaraz L.D."/>
            <person name="Aerts A."/>
            <person name="Antal Z."/>
            <person name="Atanasova L."/>
            <person name="Cervantes-Badillo M.G."/>
            <person name="Challacombe J."/>
            <person name="Chertkov O."/>
            <person name="McCluskey K."/>
            <person name="Coulpier F."/>
            <person name="Deshpande N."/>
            <person name="von Doehren H."/>
            <person name="Ebbole D.J."/>
            <person name="Esquivel-Naranjo E.U."/>
            <person name="Fekete E."/>
            <person name="Flipphi M."/>
            <person name="Glaser F."/>
            <person name="Gomez-Rodriguez E.Y."/>
            <person name="Gruber S."/>
            <person name="Han C."/>
            <person name="Henrissat B."/>
            <person name="Hermosa R."/>
            <person name="Hernandez-Onate M."/>
            <person name="Karaffa L."/>
            <person name="Kosti I."/>
            <person name="Le Crom S."/>
            <person name="Lindquist E."/>
            <person name="Lucas S."/>
            <person name="Luebeck M."/>
            <person name="Luebeck P.S."/>
            <person name="Margeot A."/>
            <person name="Metz B."/>
            <person name="Misra M."/>
            <person name="Nevalainen H."/>
            <person name="Omann M."/>
            <person name="Packer N."/>
            <person name="Perrone G."/>
            <person name="Uresti-Rivera E.E."/>
            <person name="Salamov A."/>
            <person name="Schmoll M."/>
            <person name="Seiboth B."/>
            <person name="Shapiro H."/>
            <person name="Sukno S."/>
            <person name="Tamayo-Ramos J.A."/>
            <person name="Tisch D."/>
            <person name="Wiest A."/>
            <person name="Wilkinson H.H."/>
            <person name="Zhang M."/>
            <person name="Coutinho P.M."/>
            <person name="Kenerley C.M."/>
            <person name="Monte E."/>
            <person name="Baker S.E."/>
            <person name="Grigoriev I.V."/>
        </authorList>
    </citation>
    <scope>NUCLEOTIDE SEQUENCE [LARGE SCALE GENOMIC DNA]</scope>
    <source>
        <strain>ATCC 20476 / IMI 206040</strain>
    </source>
</reference>
<reference key="2">
    <citation type="journal article" date="2013" name="Microbiology">
        <title>Role of the methylcitrate cycle in growth, antagonism and induction of systemic defence responses in the fungal biocontrol agent Trichoderma atroviride.</title>
        <authorList>
            <person name="Dubey M.K."/>
            <person name="Broberg A."/>
            <person name="Jensen D.F."/>
            <person name="Karlsson M."/>
        </authorList>
    </citation>
    <scope>FUNCTION</scope>
    <scope>DISRUPTION PHENOTYPE</scope>
</reference>
<sequence>MAASAPSNSLPPADSYQLLPEAQKAGAAEDALYEAQVKEIEEWWASPRFAGIRRPYSAADVASKRGSQHFRYPSSVMATKLFNLIREREAKGEPIHTMGAIDPVQMTQQAPHQEVLYISGWACSSVLTSTNEVSPDFGDYPYNTVPNQVQRLAKAQSMHDRKQWDTRRKMSPDERSKTPYTDYLRPIIADGDTGHGGLSAVLKLAKLFAENGAAAVHFEDQLHGGKKCGHLAGKVLVPTGEHINRLNAARFQWDVMGSENLVIARTDSESGRLISSAIDVRDHEFILGIADPAVEPLAETLQSMEARGATGAEIDVFEAKWVKSSTLVTFDEAAVAHMKKEGVSQAKIDEYLSATALDRDMGISRRRALASQFTETPVYFNWDVPRTREGYYHFRAGMEAATKRALAFAPYADLLWVETGDPNVEVAAKLGRAVRSVNPGKSLVYNLSPSFNWMAHGFSEEGLKSFIWDIAKEGFTLQLISLAGLHSTATITNELAKKFKTDGMKAYVEVVQRREKELGCDVLTHQKWSGASYIDGILGAIQSGNSSSRSMGEGNTEGQFD</sequence>
<accession>G9NNY7</accession>
<name>ACEB_HYPAI</name>
<protein>
    <recommendedName>
        <fullName evidence="1">2-methylisocitrate lyase, mitochondrial</fullName>
        <ecNumber evidence="1">4.1.3.30</ecNumber>
    </recommendedName>
</protein>
<dbReference type="EC" id="4.1.3.30" evidence="1"/>
<dbReference type="EMBL" id="ABDG02000020">
    <property type="protein sequence ID" value="EHK47774.1"/>
    <property type="molecule type" value="Genomic_DNA"/>
</dbReference>
<dbReference type="RefSeq" id="XP_013945948.1">
    <property type="nucleotide sequence ID" value="XM_014090473.1"/>
</dbReference>
<dbReference type="SMR" id="G9NNY7"/>
<dbReference type="STRING" id="452589.G9NNY7"/>
<dbReference type="GeneID" id="25776251"/>
<dbReference type="KEGG" id="tatv:25776251"/>
<dbReference type="eggNOG" id="KOG1260">
    <property type="taxonomic scope" value="Eukaryota"/>
</dbReference>
<dbReference type="HOGENOM" id="CLU_019214_2_2_1"/>
<dbReference type="OMA" id="TVPHADF"/>
<dbReference type="OrthoDB" id="4078635at2759"/>
<dbReference type="UniPathway" id="UPA00946"/>
<dbReference type="Proteomes" id="UP000005426">
    <property type="component" value="Unassembled WGS sequence"/>
</dbReference>
<dbReference type="GO" id="GO:0005759">
    <property type="term" value="C:mitochondrial matrix"/>
    <property type="evidence" value="ECO:0007669"/>
    <property type="project" value="UniProtKB-SubCell"/>
</dbReference>
<dbReference type="GO" id="GO:0004451">
    <property type="term" value="F:isocitrate lyase activity"/>
    <property type="evidence" value="ECO:0007669"/>
    <property type="project" value="InterPro"/>
</dbReference>
<dbReference type="GO" id="GO:0046421">
    <property type="term" value="F:methylisocitrate lyase activity"/>
    <property type="evidence" value="ECO:0007669"/>
    <property type="project" value="UniProtKB-EC"/>
</dbReference>
<dbReference type="GO" id="GO:0019629">
    <property type="term" value="P:propionate catabolic process, 2-methylcitrate cycle"/>
    <property type="evidence" value="ECO:0007669"/>
    <property type="project" value="EnsemblFungi"/>
</dbReference>
<dbReference type="CDD" id="cd00377">
    <property type="entry name" value="ICL_PEPM"/>
    <property type="match status" value="1"/>
</dbReference>
<dbReference type="FunFam" id="1.10.10.850:FF:000001">
    <property type="entry name" value="Isocitrate lyase"/>
    <property type="match status" value="1"/>
</dbReference>
<dbReference type="Gene3D" id="1.10.10.850">
    <property type="match status" value="1"/>
</dbReference>
<dbReference type="Gene3D" id="3.20.20.60">
    <property type="entry name" value="Phosphoenolpyruvate-binding domains"/>
    <property type="match status" value="1"/>
</dbReference>
<dbReference type="InterPro" id="IPR039556">
    <property type="entry name" value="ICL/PEPM"/>
</dbReference>
<dbReference type="InterPro" id="IPR006254">
    <property type="entry name" value="Isocitrate_lyase"/>
</dbReference>
<dbReference type="InterPro" id="IPR018523">
    <property type="entry name" value="Isocitrate_lyase_ph_CS"/>
</dbReference>
<dbReference type="InterPro" id="IPR015813">
    <property type="entry name" value="Pyrv/PenolPyrv_kinase-like_dom"/>
</dbReference>
<dbReference type="InterPro" id="IPR040442">
    <property type="entry name" value="Pyrv_kinase-like_dom_sf"/>
</dbReference>
<dbReference type="NCBIfam" id="TIGR01346">
    <property type="entry name" value="isocit_lyase"/>
    <property type="match status" value="1"/>
</dbReference>
<dbReference type="PANTHER" id="PTHR21631">
    <property type="entry name" value="ISOCITRATE LYASE/MALATE SYNTHASE"/>
    <property type="match status" value="1"/>
</dbReference>
<dbReference type="PANTHER" id="PTHR21631:SF13">
    <property type="entry name" value="MITOCHONDRIAL 2-METHYLISOCITRATE LYASE ICL2"/>
    <property type="match status" value="1"/>
</dbReference>
<dbReference type="Pfam" id="PF00463">
    <property type="entry name" value="ICL"/>
    <property type="match status" value="1"/>
</dbReference>
<dbReference type="PIRSF" id="PIRSF001362">
    <property type="entry name" value="Isocit_lyase"/>
    <property type="match status" value="1"/>
</dbReference>
<dbReference type="SUPFAM" id="SSF51621">
    <property type="entry name" value="Phosphoenolpyruvate/pyruvate domain"/>
    <property type="match status" value="1"/>
</dbReference>
<dbReference type="PROSITE" id="PS00161">
    <property type="entry name" value="ISOCITRATE_LYASE"/>
    <property type="match status" value="1"/>
</dbReference>
<proteinExistence type="inferred from homology"/>
<feature type="transit peptide" description="Mitochondrion" evidence="6">
    <location>
        <begin position="1"/>
        <end status="unknown"/>
    </location>
</feature>
<feature type="chain" id="PRO_0000433359" description="2-methylisocitrate lyase, mitochondrial">
    <location>
        <begin status="unknown"/>
        <end position="561"/>
    </location>
</feature>
<feature type="region of interest" description="Disordered" evidence="3">
    <location>
        <begin position="154"/>
        <end position="177"/>
    </location>
</feature>
<feature type="compositionally biased region" description="Basic and acidic residues" evidence="3">
    <location>
        <begin position="157"/>
        <end position="177"/>
    </location>
</feature>
<feature type="active site" evidence="2">
    <location>
        <position position="228"/>
    </location>
</feature>
<gene>
    <name evidence="5" type="primary">mcl</name>
    <name type="ORF">TRIATDRAFT_154163</name>
</gene>
<comment type="function">
    <text evidence="1 4">Component of the methylcitrate cycle that catalyzes the formation of pyruvate and succinate from 2-methylisocitrate during the metabolism of endogenous propionyl-CoA (By similarity). Plays an important role for growth and development, but also in antagonism, root colonization and induction of defense responses in plants (PubMed:24100269).</text>
</comment>
<comment type="catalytic activity">
    <reaction evidence="1">
        <text>(2S,3R)-3-hydroxybutane-1,2,3-tricarboxylate = pyruvate + succinate</text>
        <dbReference type="Rhea" id="RHEA:16809"/>
        <dbReference type="ChEBI" id="CHEBI:15361"/>
        <dbReference type="ChEBI" id="CHEBI:30031"/>
        <dbReference type="ChEBI" id="CHEBI:57429"/>
        <dbReference type="EC" id="4.1.3.30"/>
    </reaction>
</comment>
<comment type="cofactor">
    <cofactor evidence="1">
        <name>Mg(2+)</name>
        <dbReference type="ChEBI" id="CHEBI:18420"/>
    </cofactor>
</comment>
<comment type="pathway">
    <text evidence="1">Organic acid metabolism; propanoate degradation.</text>
</comment>
<comment type="subcellular location">
    <subcellularLocation>
        <location evidence="6">Mitochondrion matrix</location>
    </subcellularLocation>
</comment>
<comment type="disruption phenotype">
    <text evidence="4">Abolishes growth and conidial germination when propionate is the sole carbon source. Reduces growth rate and numbers of germinating conidia on butyrate, ethanol, citrate and Tween 20. Also leads to delayed conidial pigmentation when grown on non-fermentable carbon compounds as the sole carbon source. Results in decreased tolerance to osmotic stress, shows reduced in vitro antagonism against Botryotinia fuckeliana, and delays root colonization.</text>
</comment>
<comment type="similarity">
    <text evidence="6">Belongs to the isocitrate lyase/PEP mutase superfamily. Isocitrate lyase family.</text>
</comment>
<evidence type="ECO:0000250" key="1">
    <source>
        <dbReference type="UniProtKB" id="C8V9Y5"/>
    </source>
</evidence>
<evidence type="ECO:0000255" key="2">
    <source>
        <dbReference type="PROSITE-ProRule" id="PRU10119"/>
    </source>
</evidence>
<evidence type="ECO:0000256" key="3">
    <source>
        <dbReference type="SAM" id="MobiDB-lite"/>
    </source>
</evidence>
<evidence type="ECO:0000269" key="4">
    <source>
    </source>
</evidence>
<evidence type="ECO:0000303" key="5">
    <source>
    </source>
</evidence>
<evidence type="ECO:0000305" key="6"/>